<feature type="chain" id="PRO_1000195947" description="Large ribosomal subunit protein bL28">
    <location>
        <begin position="1"/>
        <end position="63"/>
    </location>
</feature>
<comment type="similarity">
    <text evidence="1">Belongs to the bacterial ribosomal protein bL28 family.</text>
</comment>
<gene>
    <name evidence="1" type="primary">rpmB</name>
    <name type="ordered locus">trd_0089</name>
</gene>
<accession>B9L2A7</accession>
<name>RL28_THERP</name>
<organism>
    <name type="scientific">Thermomicrobium roseum (strain ATCC 27502 / DSM 5159 / P-2)</name>
    <dbReference type="NCBI Taxonomy" id="309801"/>
    <lineage>
        <taxon>Bacteria</taxon>
        <taxon>Pseudomonadati</taxon>
        <taxon>Thermomicrobiota</taxon>
        <taxon>Thermomicrobia</taxon>
        <taxon>Thermomicrobiales</taxon>
        <taxon>Thermomicrobiaceae</taxon>
        <taxon>Thermomicrobium</taxon>
    </lineage>
</organism>
<dbReference type="EMBL" id="CP001275">
    <property type="protein sequence ID" value="ACM05298.1"/>
    <property type="molecule type" value="Genomic_DNA"/>
</dbReference>
<dbReference type="RefSeq" id="WP_012641503.1">
    <property type="nucleotide sequence ID" value="NC_011959.1"/>
</dbReference>
<dbReference type="SMR" id="B9L2A7"/>
<dbReference type="STRING" id="309801.trd_0089"/>
<dbReference type="KEGG" id="tro:trd_0089"/>
<dbReference type="eggNOG" id="COG0227">
    <property type="taxonomic scope" value="Bacteria"/>
</dbReference>
<dbReference type="HOGENOM" id="CLU_064548_7_0_0"/>
<dbReference type="OrthoDB" id="9805609at2"/>
<dbReference type="Proteomes" id="UP000000447">
    <property type="component" value="Chromosome"/>
</dbReference>
<dbReference type="GO" id="GO:1990904">
    <property type="term" value="C:ribonucleoprotein complex"/>
    <property type="evidence" value="ECO:0007669"/>
    <property type="project" value="UniProtKB-KW"/>
</dbReference>
<dbReference type="GO" id="GO:0005840">
    <property type="term" value="C:ribosome"/>
    <property type="evidence" value="ECO:0007669"/>
    <property type="project" value="UniProtKB-KW"/>
</dbReference>
<dbReference type="GO" id="GO:0003735">
    <property type="term" value="F:structural constituent of ribosome"/>
    <property type="evidence" value="ECO:0007669"/>
    <property type="project" value="InterPro"/>
</dbReference>
<dbReference type="GO" id="GO:0006412">
    <property type="term" value="P:translation"/>
    <property type="evidence" value="ECO:0007669"/>
    <property type="project" value="UniProtKB-UniRule"/>
</dbReference>
<dbReference type="Gene3D" id="2.30.170.40">
    <property type="entry name" value="Ribosomal protein L28/L24"/>
    <property type="match status" value="1"/>
</dbReference>
<dbReference type="HAMAP" id="MF_00373">
    <property type="entry name" value="Ribosomal_bL28"/>
    <property type="match status" value="1"/>
</dbReference>
<dbReference type="InterPro" id="IPR050096">
    <property type="entry name" value="Bacterial_rp_bL28"/>
</dbReference>
<dbReference type="InterPro" id="IPR026569">
    <property type="entry name" value="Ribosomal_bL28"/>
</dbReference>
<dbReference type="InterPro" id="IPR034704">
    <property type="entry name" value="Ribosomal_bL28/bL31-like_sf"/>
</dbReference>
<dbReference type="InterPro" id="IPR001383">
    <property type="entry name" value="Ribosomal_bL28_bact-type"/>
</dbReference>
<dbReference type="InterPro" id="IPR037147">
    <property type="entry name" value="Ribosomal_bL28_sf"/>
</dbReference>
<dbReference type="NCBIfam" id="TIGR00009">
    <property type="entry name" value="L28"/>
    <property type="match status" value="1"/>
</dbReference>
<dbReference type="PANTHER" id="PTHR39080">
    <property type="entry name" value="50S RIBOSOMAL PROTEIN L28"/>
    <property type="match status" value="1"/>
</dbReference>
<dbReference type="PANTHER" id="PTHR39080:SF1">
    <property type="entry name" value="LARGE RIBOSOMAL SUBUNIT PROTEIN BL28A"/>
    <property type="match status" value="1"/>
</dbReference>
<dbReference type="Pfam" id="PF00830">
    <property type="entry name" value="Ribosomal_L28"/>
    <property type="match status" value="1"/>
</dbReference>
<dbReference type="SUPFAM" id="SSF143800">
    <property type="entry name" value="L28p-like"/>
    <property type="match status" value="1"/>
</dbReference>
<evidence type="ECO:0000255" key="1">
    <source>
        <dbReference type="HAMAP-Rule" id="MF_00373"/>
    </source>
</evidence>
<evidence type="ECO:0000305" key="2"/>
<proteinExistence type="inferred from homology"/>
<protein>
    <recommendedName>
        <fullName evidence="1">Large ribosomal subunit protein bL28</fullName>
    </recommendedName>
    <alternativeName>
        <fullName evidence="2">50S ribosomal protein L28</fullName>
    </alternativeName>
</protein>
<keyword id="KW-1185">Reference proteome</keyword>
<keyword id="KW-0687">Ribonucleoprotein</keyword>
<keyword id="KW-0689">Ribosomal protein</keyword>
<sequence length="63" mass="7349">MAMCELCGKKPMFGHNVSHSNRKTNRKFKPNVQRVTVILNGVPKRMRICTRCLRTLYKEAREA</sequence>
<reference key="1">
    <citation type="journal article" date="2009" name="PLoS ONE">
        <title>Complete genome sequence of the aerobic CO-oxidizing thermophile Thermomicrobium roseum.</title>
        <authorList>
            <person name="Wu D."/>
            <person name="Raymond J."/>
            <person name="Wu M."/>
            <person name="Chatterji S."/>
            <person name="Ren Q."/>
            <person name="Graham J.E."/>
            <person name="Bryant D.A."/>
            <person name="Robb F."/>
            <person name="Colman A."/>
            <person name="Tallon L.J."/>
            <person name="Badger J.H."/>
            <person name="Madupu R."/>
            <person name="Ward N.L."/>
            <person name="Eisen J.A."/>
        </authorList>
    </citation>
    <scope>NUCLEOTIDE SEQUENCE [LARGE SCALE GENOMIC DNA]</scope>
    <source>
        <strain>ATCC 27502 / DSM 5159 / P-2</strain>
    </source>
</reference>